<evidence type="ECO:0000250" key="1">
    <source>
        <dbReference type="UniProtKB" id="A0A6C0WW36"/>
    </source>
</evidence>
<evidence type="ECO:0000250" key="2">
    <source>
        <dbReference type="UniProtKB" id="B2KPR3"/>
    </source>
</evidence>
<evidence type="ECO:0000250" key="3">
    <source>
        <dbReference type="UniProtKB" id="Q9FLN8"/>
    </source>
</evidence>
<evidence type="ECO:0000305" key="4"/>
<evidence type="ECO:0000305" key="5">
    <source>
    </source>
</evidence>
<proteinExistence type="evidence at transcript level"/>
<protein>
    <recommendedName>
        <fullName>Inactive anthranilate O-methyltransferase 1</fullName>
    </recommendedName>
    <alternativeName>
        <fullName>Anthranilic acid methyltransferase 1</fullName>
    </alternativeName>
    <alternativeName>
        <fullName>O-methyltransferase 1</fullName>
    </alternativeName>
</protein>
<comment type="miscellaneous">
    <text evidence="5">Because cv. Delprim is a hybrid line, AAMT1 and AAMT1I are likely alleles of one single locus. However, AAMT1I showed no enzymatic activity with all tested substrates (PubMed:20519632).</text>
</comment>
<comment type="similarity">
    <text evidence="4">Belongs to the methyltransferase superfamily. Type-7 methyltransferase family. SABATH subfamily.</text>
</comment>
<gene>
    <name type="primary">AAMT1I</name>
    <name type="synonym">OMT1B</name>
</gene>
<organism>
    <name type="scientific">Zea mays</name>
    <name type="common">Maize</name>
    <dbReference type="NCBI Taxonomy" id="4577"/>
    <lineage>
        <taxon>Eukaryota</taxon>
        <taxon>Viridiplantae</taxon>
        <taxon>Streptophyta</taxon>
        <taxon>Embryophyta</taxon>
        <taxon>Tracheophyta</taxon>
        <taxon>Spermatophyta</taxon>
        <taxon>Magnoliopsida</taxon>
        <taxon>Liliopsida</taxon>
        <taxon>Poales</taxon>
        <taxon>Poaceae</taxon>
        <taxon>PACMAD clade</taxon>
        <taxon>Panicoideae</taxon>
        <taxon>Andropogonodae</taxon>
        <taxon>Andropogoneae</taxon>
        <taxon>Tripsacinae</taxon>
        <taxon>Zea</taxon>
    </lineage>
</organism>
<keyword id="KW-0460">Magnesium</keyword>
<keyword id="KW-0479">Metal-binding</keyword>
<keyword id="KW-1185">Reference proteome</keyword>
<keyword id="KW-0949">S-adenosyl-L-methionine</keyword>
<reference key="1">
    <citation type="journal article" date="2010" name="Plant Physiol.">
        <title>Herbivore-induced SABATH methyltransferases of maize that methylate anthranilic acid using s-adenosyl-L-methionine.</title>
        <authorList>
            <person name="Kollner T.G."/>
            <person name="Lenk C."/>
            <person name="Zhao N."/>
            <person name="Seidl-Adams I."/>
            <person name="Gershenzon J."/>
            <person name="Chen F."/>
            <person name="Degenhardt J."/>
        </authorList>
    </citation>
    <scope>NUCLEOTIDE SEQUENCE [MRNA]</scope>
    <source>
        <strain>cv. Delprim</strain>
    </source>
</reference>
<accession>D9J0Z8</accession>
<dbReference type="EMBL" id="HM242245">
    <property type="protein sequence ID" value="ADI87450.1"/>
    <property type="molecule type" value="mRNA"/>
</dbReference>
<dbReference type="RefSeq" id="NP_001182137.1">
    <property type="nucleotide sequence ID" value="NM_001195208.1"/>
</dbReference>
<dbReference type="SMR" id="D9J0Z8"/>
<dbReference type="FunCoup" id="D9J0Z8">
    <property type="interactions" value="14"/>
</dbReference>
<dbReference type="STRING" id="4577.D9J0Z8"/>
<dbReference type="KEGG" id="zma:100500707"/>
<dbReference type="InParanoid" id="D9J0Z8"/>
<dbReference type="OrthoDB" id="742322at2759"/>
<dbReference type="Proteomes" id="UP000007305">
    <property type="component" value="Unplaced"/>
</dbReference>
<dbReference type="ExpressionAtlas" id="D9J0Z8">
    <property type="expression patterns" value="baseline and differential"/>
</dbReference>
<dbReference type="GO" id="GO:0008757">
    <property type="term" value="F:S-adenosylmethionine-dependent methyltransferase activity"/>
    <property type="evidence" value="ECO:0000318"/>
    <property type="project" value="GO_Central"/>
</dbReference>
<dbReference type="GO" id="GO:0032259">
    <property type="term" value="P:methylation"/>
    <property type="evidence" value="ECO:0000318"/>
    <property type="project" value="GO_Central"/>
</dbReference>
<dbReference type="Gene3D" id="1.10.1200.270">
    <property type="entry name" value="Methyltransferase, alpha-helical capping domain"/>
    <property type="match status" value="1"/>
</dbReference>
<dbReference type="Gene3D" id="3.40.50.150">
    <property type="entry name" value="Vaccinia Virus protein VP39"/>
    <property type="match status" value="1"/>
</dbReference>
<dbReference type="InterPro" id="IPR005299">
    <property type="entry name" value="MeTrfase_7"/>
</dbReference>
<dbReference type="InterPro" id="IPR042086">
    <property type="entry name" value="MeTrfase_capping"/>
</dbReference>
<dbReference type="InterPro" id="IPR029063">
    <property type="entry name" value="SAM-dependent_MTases_sf"/>
</dbReference>
<dbReference type="PANTHER" id="PTHR31009">
    <property type="entry name" value="S-ADENOSYL-L-METHIONINE:CARBOXYL METHYLTRANSFERASE FAMILY PROTEIN"/>
    <property type="match status" value="1"/>
</dbReference>
<dbReference type="Pfam" id="PF03492">
    <property type="entry name" value="Methyltransf_7"/>
    <property type="match status" value="1"/>
</dbReference>
<dbReference type="SUPFAM" id="SSF53335">
    <property type="entry name" value="S-adenosyl-L-methionine-dependent methyltransferases"/>
    <property type="match status" value="1"/>
</dbReference>
<sequence length="382" mass="43548">MPMRIERDLHMAIGNGETSYTKNSRIQEKAMFQMKSVLEEATRAVCTTLLPQTMVVADLGCSSGPNTLRFVTEVTRIIAHHCKLEHNRRHDHLPQLQFFLNDLPGNDFNNLFQLIEQFNKSSTTHKGDAATEALQPPCYISGLPGSYYTRIFSSESVHLFHSLFCLQWRSQAPEQLKGTQKSCLDIYITKAMSPSMVKLFQQQFQKDFSLFLRLRYEELVSGGQMVLTFIGRKHEDVFTGESNHLYGLLAQSLKSLVDEGLVEKEKLESFYLPIYSPSVGEVEAIVKQLGLFNMNHVKVFEINWDPYDDSEGDDVHNSIESGENVAKCLRAVMEPLVASQFGERILDELFKEYARRVAKHLENEKTKHAVLVLSIEKAIIHV</sequence>
<name>AAM1I_MAIZE</name>
<feature type="chain" id="PRO_0000423911" description="Inactive anthranilate O-methyltransferase 1">
    <location>
        <begin position="1"/>
        <end position="382"/>
    </location>
</feature>
<feature type="binding site" evidence="2">
    <location>
        <position position="20"/>
    </location>
    <ligand>
        <name>S-adenosyl-L-homocysteine</name>
        <dbReference type="ChEBI" id="CHEBI:57856"/>
    </ligand>
</feature>
<feature type="binding site" evidence="2">
    <location>
        <position position="61"/>
    </location>
    <ligand>
        <name>S-adenosyl-L-homocysteine</name>
        <dbReference type="ChEBI" id="CHEBI:57856"/>
    </ligand>
</feature>
<feature type="binding site" evidence="2">
    <location>
        <position position="66"/>
    </location>
    <ligand>
        <name>S-adenosyl-L-homocysteine</name>
        <dbReference type="ChEBI" id="CHEBI:57856"/>
    </ligand>
</feature>
<feature type="binding site" evidence="2">
    <location>
        <position position="102"/>
    </location>
    <ligand>
        <name>S-adenosyl-L-homocysteine</name>
        <dbReference type="ChEBI" id="CHEBI:57856"/>
    </ligand>
</feature>
<feature type="binding site" evidence="1">
    <location>
        <position position="103"/>
    </location>
    <ligand>
        <name>S-adenosyl-L-homocysteine</name>
        <dbReference type="ChEBI" id="CHEBI:57856"/>
    </ligand>
</feature>
<feature type="binding site" evidence="2">
    <location>
        <position position="146"/>
    </location>
    <ligand>
        <name>S-adenosyl-L-homocysteine</name>
        <dbReference type="ChEBI" id="CHEBI:57856"/>
    </ligand>
</feature>
<feature type="binding site" evidence="2">
    <location>
        <position position="147"/>
    </location>
    <ligand>
        <name>S-adenosyl-L-homocysteine</name>
        <dbReference type="ChEBI" id="CHEBI:57856"/>
    </ligand>
</feature>
<feature type="binding site" evidence="3">
    <location>
        <position position="268"/>
    </location>
    <ligand>
        <name>Mg(2+)</name>
        <dbReference type="ChEBI" id="CHEBI:18420"/>
    </ligand>
</feature>
<feature type="binding site" evidence="3">
    <location>
        <position position="270"/>
    </location>
    <ligand>
        <name>Mg(2+)</name>
        <dbReference type="ChEBI" id="CHEBI:18420"/>
    </ligand>
</feature>